<proteinExistence type="inferred from homology"/>
<comment type="similarity">
    <text evidence="1">Belongs to the bacterial ribosomal protein bL28 family.</text>
</comment>
<evidence type="ECO:0000255" key="1">
    <source>
        <dbReference type="HAMAP-Rule" id="MF_00373"/>
    </source>
</evidence>
<evidence type="ECO:0000305" key="2"/>
<feature type="chain" id="PRO_1000007393" description="Large ribosomal subunit protein bL28">
    <location>
        <begin position="1"/>
        <end position="70"/>
    </location>
</feature>
<protein>
    <recommendedName>
        <fullName evidence="1">Large ribosomal subunit protein bL28</fullName>
    </recommendedName>
    <alternativeName>
        <fullName evidence="2">50S ribosomal protein L28</fullName>
    </alternativeName>
</protein>
<dbReference type="EMBL" id="CP000716">
    <property type="protein sequence ID" value="ABR30888.1"/>
    <property type="molecule type" value="Genomic_DNA"/>
</dbReference>
<dbReference type="RefSeq" id="WP_012057248.1">
    <property type="nucleotide sequence ID" value="NC_009616.1"/>
</dbReference>
<dbReference type="SMR" id="A6LLT7"/>
<dbReference type="STRING" id="391009.Tmel_1027"/>
<dbReference type="KEGG" id="tme:Tmel_1027"/>
<dbReference type="eggNOG" id="COG0227">
    <property type="taxonomic scope" value="Bacteria"/>
</dbReference>
<dbReference type="HOGENOM" id="CLU_064548_7_0_0"/>
<dbReference type="OrthoDB" id="9805609at2"/>
<dbReference type="Proteomes" id="UP000001110">
    <property type="component" value="Chromosome"/>
</dbReference>
<dbReference type="GO" id="GO:1990904">
    <property type="term" value="C:ribonucleoprotein complex"/>
    <property type="evidence" value="ECO:0007669"/>
    <property type="project" value="UniProtKB-KW"/>
</dbReference>
<dbReference type="GO" id="GO:0005840">
    <property type="term" value="C:ribosome"/>
    <property type="evidence" value="ECO:0007669"/>
    <property type="project" value="UniProtKB-KW"/>
</dbReference>
<dbReference type="GO" id="GO:0003735">
    <property type="term" value="F:structural constituent of ribosome"/>
    <property type="evidence" value="ECO:0007669"/>
    <property type="project" value="InterPro"/>
</dbReference>
<dbReference type="GO" id="GO:0006412">
    <property type="term" value="P:translation"/>
    <property type="evidence" value="ECO:0007669"/>
    <property type="project" value="UniProtKB-UniRule"/>
</dbReference>
<dbReference type="Gene3D" id="2.30.170.40">
    <property type="entry name" value="Ribosomal protein L28/L24"/>
    <property type="match status" value="1"/>
</dbReference>
<dbReference type="HAMAP" id="MF_00373">
    <property type="entry name" value="Ribosomal_bL28"/>
    <property type="match status" value="1"/>
</dbReference>
<dbReference type="InterPro" id="IPR050096">
    <property type="entry name" value="Bacterial_rp_bL28"/>
</dbReference>
<dbReference type="InterPro" id="IPR026569">
    <property type="entry name" value="Ribosomal_bL28"/>
</dbReference>
<dbReference type="InterPro" id="IPR034704">
    <property type="entry name" value="Ribosomal_bL28/bL31-like_sf"/>
</dbReference>
<dbReference type="InterPro" id="IPR001383">
    <property type="entry name" value="Ribosomal_bL28_bact-type"/>
</dbReference>
<dbReference type="InterPro" id="IPR037147">
    <property type="entry name" value="Ribosomal_bL28_sf"/>
</dbReference>
<dbReference type="NCBIfam" id="TIGR00009">
    <property type="entry name" value="L28"/>
    <property type="match status" value="1"/>
</dbReference>
<dbReference type="PANTHER" id="PTHR39080">
    <property type="entry name" value="50S RIBOSOMAL PROTEIN L28"/>
    <property type="match status" value="1"/>
</dbReference>
<dbReference type="PANTHER" id="PTHR39080:SF1">
    <property type="entry name" value="LARGE RIBOSOMAL SUBUNIT PROTEIN BL28A"/>
    <property type="match status" value="1"/>
</dbReference>
<dbReference type="Pfam" id="PF00830">
    <property type="entry name" value="Ribosomal_L28"/>
    <property type="match status" value="1"/>
</dbReference>
<dbReference type="SUPFAM" id="SSF143800">
    <property type="entry name" value="L28p-like"/>
    <property type="match status" value="1"/>
</dbReference>
<name>RL28_THEM4</name>
<reference key="1">
    <citation type="submission" date="2007-05" db="EMBL/GenBank/DDBJ databases">
        <title>Complete sequence of Thermosipho melanesiensis BI429.</title>
        <authorList>
            <consortium name="US DOE Joint Genome Institute"/>
            <person name="Copeland A."/>
            <person name="Lucas S."/>
            <person name="Lapidus A."/>
            <person name="Barry K."/>
            <person name="Glavina del Rio T."/>
            <person name="Dalin E."/>
            <person name="Tice H."/>
            <person name="Pitluck S."/>
            <person name="Chertkov O."/>
            <person name="Brettin T."/>
            <person name="Bruce D."/>
            <person name="Detter J.C."/>
            <person name="Han C."/>
            <person name="Schmutz J."/>
            <person name="Larimer F."/>
            <person name="Land M."/>
            <person name="Hauser L."/>
            <person name="Kyrpides N."/>
            <person name="Mikhailova N."/>
            <person name="Nelson K."/>
            <person name="Gogarten J.P."/>
            <person name="Noll K."/>
            <person name="Richardson P."/>
        </authorList>
    </citation>
    <scope>NUCLEOTIDE SEQUENCE [LARGE SCALE GENOMIC DNA]</scope>
    <source>
        <strain>DSM 12029 / CIP 104789 / BI429</strain>
    </source>
</reference>
<organism>
    <name type="scientific">Thermosipho melanesiensis (strain DSM 12029 / CIP 104789 / BI429)</name>
    <dbReference type="NCBI Taxonomy" id="391009"/>
    <lineage>
        <taxon>Bacteria</taxon>
        <taxon>Thermotogati</taxon>
        <taxon>Thermotogota</taxon>
        <taxon>Thermotogae</taxon>
        <taxon>Thermotogales</taxon>
        <taxon>Fervidobacteriaceae</taxon>
        <taxon>Thermosipho</taxon>
    </lineage>
</organism>
<gene>
    <name evidence="1" type="primary">rpmB</name>
    <name type="ordered locus">Tmel_1027</name>
</gene>
<sequence>MAKCQVCGKGPVTGKNVSHSNRRTNRWFKPNLQKVRVITDEGKIKRMWVCTDCLSAGKVKRYVSTKVEAQ</sequence>
<accession>A6LLT7</accession>
<keyword id="KW-0687">Ribonucleoprotein</keyword>
<keyword id="KW-0689">Ribosomal protein</keyword>